<dbReference type="EC" id="3.1.-.-"/>
<dbReference type="EMBL" id="CP000255">
    <property type="protein sequence ID" value="ABD22408.1"/>
    <property type="molecule type" value="Genomic_DNA"/>
</dbReference>
<dbReference type="RefSeq" id="WP_000621175.1">
    <property type="nucleotide sequence ID" value="NZ_CP027476.1"/>
</dbReference>
<dbReference type="BMRB" id="Q2FF56"/>
<dbReference type="SMR" id="Q2FF56"/>
<dbReference type="KEGG" id="saa:SAUSA300_2026"/>
<dbReference type="HOGENOM" id="CLU_121823_1_0_9"/>
<dbReference type="OMA" id="NDIGNQY"/>
<dbReference type="Proteomes" id="UP000001939">
    <property type="component" value="Chromosome"/>
</dbReference>
<dbReference type="GO" id="GO:0003677">
    <property type="term" value="F:DNA binding"/>
    <property type="evidence" value="ECO:0007669"/>
    <property type="project" value="InterPro"/>
</dbReference>
<dbReference type="GO" id="GO:0003723">
    <property type="term" value="F:RNA binding"/>
    <property type="evidence" value="ECO:0007669"/>
    <property type="project" value="UniProtKB-KW"/>
</dbReference>
<dbReference type="GO" id="GO:0004521">
    <property type="term" value="F:RNA endonuclease activity"/>
    <property type="evidence" value="ECO:0007669"/>
    <property type="project" value="TreeGrafter"/>
</dbReference>
<dbReference type="GO" id="GO:0006402">
    <property type="term" value="P:mRNA catabolic process"/>
    <property type="evidence" value="ECO:0007669"/>
    <property type="project" value="TreeGrafter"/>
</dbReference>
<dbReference type="GO" id="GO:0016075">
    <property type="term" value="P:rRNA catabolic process"/>
    <property type="evidence" value="ECO:0007669"/>
    <property type="project" value="TreeGrafter"/>
</dbReference>
<dbReference type="Gene3D" id="2.30.30.110">
    <property type="match status" value="1"/>
</dbReference>
<dbReference type="InterPro" id="IPR003477">
    <property type="entry name" value="PemK-like"/>
</dbReference>
<dbReference type="InterPro" id="IPR011067">
    <property type="entry name" value="Plasmid_toxin/cell-grow_inhib"/>
</dbReference>
<dbReference type="PANTHER" id="PTHR33988:SF2">
    <property type="entry name" value="ENDORIBONUCLEASE MAZF"/>
    <property type="match status" value="1"/>
</dbReference>
<dbReference type="PANTHER" id="PTHR33988">
    <property type="entry name" value="ENDORIBONUCLEASE MAZF-RELATED"/>
    <property type="match status" value="1"/>
</dbReference>
<dbReference type="Pfam" id="PF02452">
    <property type="entry name" value="PemK_toxin"/>
    <property type="match status" value="1"/>
</dbReference>
<dbReference type="PIRSF" id="PIRSF033490">
    <property type="entry name" value="MazF"/>
    <property type="match status" value="1"/>
</dbReference>
<dbReference type="SUPFAM" id="SSF50118">
    <property type="entry name" value="Cell growth inhibitor/plasmid maintenance toxic component"/>
    <property type="match status" value="1"/>
</dbReference>
<protein>
    <recommendedName>
        <fullName>Endoribonuclease MazF</fullName>
        <ecNumber>3.1.-.-</ecNumber>
    </recommendedName>
    <alternativeName>
        <fullName>Toxin MazF</fullName>
    </alternativeName>
    <alternativeName>
        <fullName>mRNA interferase MazF</fullName>
    </alternativeName>
</protein>
<reference key="1">
    <citation type="journal article" date="2006" name="Lancet">
        <title>Complete genome sequence of USA300, an epidemic clone of community-acquired meticillin-resistant Staphylococcus aureus.</title>
        <authorList>
            <person name="Diep B.A."/>
            <person name="Gill S.R."/>
            <person name="Chang R.F."/>
            <person name="Phan T.H."/>
            <person name="Chen J.H."/>
            <person name="Davidson M.G."/>
            <person name="Lin F."/>
            <person name="Lin J."/>
            <person name="Carleton H.A."/>
            <person name="Mongodin E.F."/>
            <person name="Sensabaugh G.F."/>
            <person name="Perdreau-Remington F."/>
        </authorList>
    </citation>
    <scope>NUCLEOTIDE SEQUENCE [LARGE SCALE GENOMIC DNA]</scope>
    <source>
        <strain>USA300</strain>
    </source>
</reference>
<sequence>MIRRGDVYLADLSPVQGSEQGGVRPVVIIQNDTGNKYSPTVIVAAITGRINKAKIPTHVEIEKKKYKLDKDSVILLEQIRTLDKKRLKEKLTYLSDDKMKEVDNALMISLGLNAVAHQKN</sequence>
<comment type="function">
    <text evidence="1">Toxic component of a type II toxin-antitoxin (TA) system. Ribosome-independent, sequence-specific endoribonuclease that cleaves mRNA, thus inhibiting protein synthesis and inducing bacterial stasis. It cuts between the first and nucleotides of 5'-UACAU-3' in single-stranded RNA. Neutralized by coexpression with cognate antitoxin MazE.</text>
</comment>
<comment type="subunit">
    <text evidence="1">Forms a complex with MazE which is no longer active as an endoribonuclease.</text>
</comment>
<comment type="similarity">
    <text evidence="2">Belongs to the PemK/MazF family.</text>
</comment>
<proteinExistence type="inferred from homology"/>
<name>MAZF_STAA3</name>
<feature type="chain" id="PRO_0000330704" description="Endoribonuclease MazF">
    <location>
        <begin position="1"/>
        <end position="120"/>
    </location>
</feature>
<gene>
    <name type="primary">mazF</name>
    <name type="ordered locus">SAUSA300_2026</name>
</gene>
<organism>
    <name type="scientific">Staphylococcus aureus (strain USA300)</name>
    <dbReference type="NCBI Taxonomy" id="367830"/>
    <lineage>
        <taxon>Bacteria</taxon>
        <taxon>Bacillati</taxon>
        <taxon>Bacillota</taxon>
        <taxon>Bacilli</taxon>
        <taxon>Bacillales</taxon>
        <taxon>Staphylococcaceae</taxon>
        <taxon>Staphylococcus</taxon>
    </lineage>
</organism>
<accession>Q2FF56</accession>
<keyword id="KW-0255">Endonuclease</keyword>
<keyword id="KW-0378">Hydrolase</keyword>
<keyword id="KW-0540">Nuclease</keyword>
<keyword id="KW-0694">RNA-binding</keyword>
<keyword id="KW-1277">Toxin-antitoxin system</keyword>
<evidence type="ECO:0000250" key="1">
    <source>
        <dbReference type="UniProtKB" id="A6QIR4"/>
    </source>
</evidence>
<evidence type="ECO:0000305" key="2"/>